<proteinExistence type="inferred from homology"/>
<organism>
    <name type="scientific">Kluyveromyces lactis (strain ATCC 8585 / CBS 2359 / DSM 70799 / NBRC 1267 / NRRL Y-1140 / WM37)</name>
    <name type="common">Yeast</name>
    <name type="synonym">Candida sphaerica</name>
    <dbReference type="NCBI Taxonomy" id="284590"/>
    <lineage>
        <taxon>Eukaryota</taxon>
        <taxon>Fungi</taxon>
        <taxon>Dikarya</taxon>
        <taxon>Ascomycota</taxon>
        <taxon>Saccharomycotina</taxon>
        <taxon>Saccharomycetes</taxon>
        <taxon>Saccharomycetales</taxon>
        <taxon>Saccharomycetaceae</taxon>
        <taxon>Kluyveromyces</taxon>
    </lineage>
</organism>
<gene>
    <name type="primary">DBP8</name>
    <name type="ordered locus">KLLA0A05203g</name>
</gene>
<feature type="chain" id="PRO_0000232289" description="ATP-dependent RNA helicase DBP8">
    <location>
        <begin position="1"/>
        <end position="435"/>
    </location>
</feature>
<feature type="domain" description="Helicase ATP-binding" evidence="2">
    <location>
        <begin position="35"/>
        <end position="211"/>
    </location>
</feature>
<feature type="domain" description="Helicase C-terminal" evidence="3">
    <location>
        <begin position="244"/>
        <end position="391"/>
    </location>
</feature>
<feature type="region of interest" description="Disordered" evidence="4">
    <location>
        <begin position="409"/>
        <end position="435"/>
    </location>
</feature>
<feature type="short sequence motif" description="Q motif">
    <location>
        <begin position="4"/>
        <end position="32"/>
    </location>
</feature>
<feature type="short sequence motif" description="DEAD box">
    <location>
        <begin position="157"/>
        <end position="160"/>
    </location>
</feature>
<feature type="compositionally biased region" description="Basic and acidic residues" evidence="4">
    <location>
        <begin position="409"/>
        <end position="429"/>
    </location>
</feature>
<feature type="binding site" evidence="2">
    <location>
        <begin position="48"/>
        <end position="55"/>
    </location>
    <ligand>
        <name>ATP</name>
        <dbReference type="ChEBI" id="CHEBI:30616"/>
    </ligand>
</feature>
<accession>Q6CXW0</accession>
<sequence length="435" mass="48395">MSNSEFKSLGCSKWLVEALNAMKIVQPTAIQKACIPEILKGRDCIGGANTGSGKTIAFAAPMLTKWSEDPQGMFGIVLTPTRELAMQIAEQFTAFGSAMNIRVAIVVGGESIVQQAIELQKRPHFIIATPGRLAHHVLNSGEDTIGGLKRVKFLVLDEADILLTETFSKDLATCVSILPPKNKRQNLLFTATMTDQVKALSDAPQTEGKPPVFTFEVESVDNVAIPKTLETTYLLVPEHVKESYLYQILTSEKYVKSSCIIFVNRTVTAEILRRTLKSLDVRVTSLHSQMPQQERTNSVQRFRAQAARVLIATDVASRGLDIPIVELVVNYDIPGNPDTFIHRAGRTARAGRHGESLCFVTEKDIQRVEAIEERINKKMEEFTDVGDTAVIRKSLTKVTAAKRESLMAMDKEGFGERRKLQKRKNESKEKTHRRT</sequence>
<reference key="1">
    <citation type="journal article" date="2004" name="Nature">
        <title>Genome evolution in yeasts.</title>
        <authorList>
            <person name="Dujon B."/>
            <person name="Sherman D."/>
            <person name="Fischer G."/>
            <person name="Durrens P."/>
            <person name="Casaregola S."/>
            <person name="Lafontaine I."/>
            <person name="de Montigny J."/>
            <person name="Marck C."/>
            <person name="Neuveglise C."/>
            <person name="Talla E."/>
            <person name="Goffard N."/>
            <person name="Frangeul L."/>
            <person name="Aigle M."/>
            <person name="Anthouard V."/>
            <person name="Babour A."/>
            <person name="Barbe V."/>
            <person name="Barnay S."/>
            <person name="Blanchin S."/>
            <person name="Beckerich J.-M."/>
            <person name="Beyne E."/>
            <person name="Bleykasten C."/>
            <person name="Boisrame A."/>
            <person name="Boyer J."/>
            <person name="Cattolico L."/>
            <person name="Confanioleri F."/>
            <person name="de Daruvar A."/>
            <person name="Despons L."/>
            <person name="Fabre E."/>
            <person name="Fairhead C."/>
            <person name="Ferry-Dumazet H."/>
            <person name="Groppi A."/>
            <person name="Hantraye F."/>
            <person name="Hennequin C."/>
            <person name="Jauniaux N."/>
            <person name="Joyet P."/>
            <person name="Kachouri R."/>
            <person name="Kerrest A."/>
            <person name="Koszul R."/>
            <person name="Lemaire M."/>
            <person name="Lesur I."/>
            <person name="Ma L."/>
            <person name="Muller H."/>
            <person name="Nicaud J.-M."/>
            <person name="Nikolski M."/>
            <person name="Oztas S."/>
            <person name="Ozier-Kalogeropoulos O."/>
            <person name="Pellenz S."/>
            <person name="Potier S."/>
            <person name="Richard G.-F."/>
            <person name="Straub M.-L."/>
            <person name="Suleau A."/>
            <person name="Swennen D."/>
            <person name="Tekaia F."/>
            <person name="Wesolowski-Louvel M."/>
            <person name="Westhof E."/>
            <person name="Wirth B."/>
            <person name="Zeniou-Meyer M."/>
            <person name="Zivanovic Y."/>
            <person name="Bolotin-Fukuhara M."/>
            <person name="Thierry A."/>
            <person name="Bouchier C."/>
            <person name="Caudron B."/>
            <person name="Scarpelli C."/>
            <person name="Gaillardin C."/>
            <person name="Weissenbach J."/>
            <person name="Wincker P."/>
            <person name="Souciet J.-L."/>
        </authorList>
    </citation>
    <scope>NUCLEOTIDE SEQUENCE [LARGE SCALE GENOMIC DNA]</scope>
    <source>
        <strain>ATCC 8585 / CBS 2359 / DSM 70799 / NBRC 1267 / NRRL Y-1140 / WM37</strain>
    </source>
</reference>
<name>DBP8_KLULA</name>
<comment type="function">
    <text evidence="1">ATP-binding RNA helicase involved in 40S ribosomal subunit biogenesis and is required for the normal formation of 18S rRNAs through pre-rRNA processing at A0, A1 and A2 sites. Required for vegetative growth (By similarity).</text>
</comment>
<comment type="catalytic activity">
    <reaction>
        <text>ATP + H2O = ADP + phosphate + H(+)</text>
        <dbReference type="Rhea" id="RHEA:13065"/>
        <dbReference type="ChEBI" id="CHEBI:15377"/>
        <dbReference type="ChEBI" id="CHEBI:15378"/>
        <dbReference type="ChEBI" id="CHEBI:30616"/>
        <dbReference type="ChEBI" id="CHEBI:43474"/>
        <dbReference type="ChEBI" id="CHEBI:456216"/>
        <dbReference type="EC" id="3.6.4.13"/>
    </reaction>
</comment>
<comment type="subcellular location">
    <subcellularLocation>
        <location evidence="1">Nucleus</location>
        <location evidence="1">Nucleolus</location>
    </subcellularLocation>
</comment>
<comment type="domain">
    <text>The Q motif is unique to and characteristic of the DEAD box family of RNA helicases and controls ATP binding and hydrolysis.</text>
</comment>
<comment type="similarity">
    <text evidence="5">Belongs to the DEAD box helicase family. DDX49/DBP8 subfamily.</text>
</comment>
<evidence type="ECO:0000250" key="1"/>
<evidence type="ECO:0000255" key="2">
    <source>
        <dbReference type="PROSITE-ProRule" id="PRU00541"/>
    </source>
</evidence>
<evidence type="ECO:0000255" key="3">
    <source>
        <dbReference type="PROSITE-ProRule" id="PRU00542"/>
    </source>
</evidence>
<evidence type="ECO:0000256" key="4">
    <source>
        <dbReference type="SAM" id="MobiDB-lite"/>
    </source>
</evidence>
<evidence type="ECO:0000305" key="5"/>
<protein>
    <recommendedName>
        <fullName>ATP-dependent RNA helicase DBP8</fullName>
        <ecNumber>3.6.4.13</ecNumber>
    </recommendedName>
</protein>
<dbReference type="EC" id="3.6.4.13"/>
<dbReference type="EMBL" id="CR382121">
    <property type="protein sequence ID" value="CAH02817.1"/>
    <property type="molecule type" value="Genomic_DNA"/>
</dbReference>
<dbReference type="RefSeq" id="XP_451229.1">
    <property type="nucleotide sequence ID" value="XM_451229.1"/>
</dbReference>
<dbReference type="SMR" id="Q6CXW0"/>
<dbReference type="FunCoup" id="Q6CXW0">
    <property type="interactions" value="937"/>
</dbReference>
<dbReference type="STRING" id="284590.Q6CXW0"/>
<dbReference type="PaxDb" id="284590-Q6CXW0"/>
<dbReference type="KEGG" id="kla:KLLA0_A05203g"/>
<dbReference type="eggNOG" id="KOG0340">
    <property type="taxonomic scope" value="Eukaryota"/>
</dbReference>
<dbReference type="HOGENOM" id="CLU_003041_1_1_1"/>
<dbReference type="InParanoid" id="Q6CXW0"/>
<dbReference type="OMA" id="IMIFTDT"/>
<dbReference type="Proteomes" id="UP000000598">
    <property type="component" value="Chromosome A"/>
</dbReference>
<dbReference type="GO" id="GO:0005829">
    <property type="term" value="C:cytosol"/>
    <property type="evidence" value="ECO:0007669"/>
    <property type="project" value="TreeGrafter"/>
</dbReference>
<dbReference type="GO" id="GO:0005730">
    <property type="term" value="C:nucleolus"/>
    <property type="evidence" value="ECO:0007669"/>
    <property type="project" value="UniProtKB-SubCell"/>
</dbReference>
<dbReference type="GO" id="GO:0005524">
    <property type="term" value="F:ATP binding"/>
    <property type="evidence" value="ECO:0007669"/>
    <property type="project" value="UniProtKB-KW"/>
</dbReference>
<dbReference type="GO" id="GO:0016887">
    <property type="term" value="F:ATP hydrolysis activity"/>
    <property type="evidence" value="ECO:0007669"/>
    <property type="project" value="RHEA"/>
</dbReference>
<dbReference type="GO" id="GO:0003723">
    <property type="term" value="F:RNA binding"/>
    <property type="evidence" value="ECO:0007669"/>
    <property type="project" value="UniProtKB-KW"/>
</dbReference>
<dbReference type="GO" id="GO:0003724">
    <property type="term" value="F:RNA helicase activity"/>
    <property type="evidence" value="ECO:0007669"/>
    <property type="project" value="UniProtKB-EC"/>
</dbReference>
<dbReference type="GO" id="GO:0006364">
    <property type="term" value="P:rRNA processing"/>
    <property type="evidence" value="ECO:0007669"/>
    <property type="project" value="UniProtKB-KW"/>
</dbReference>
<dbReference type="CDD" id="cd17955">
    <property type="entry name" value="DEADc_DDX49"/>
    <property type="match status" value="1"/>
</dbReference>
<dbReference type="CDD" id="cd18787">
    <property type="entry name" value="SF2_C_DEAD"/>
    <property type="match status" value="1"/>
</dbReference>
<dbReference type="Gene3D" id="3.40.50.300">
    <property type="entry name" value="P-loop containing nucleotide triphosphate hydrolases"/>
    <property type="match status" value="2"/>
</dbReference>
<dbReference type="InterPro" id="IPR011545">
    <property type="entry name" value="DEAD/DEAH_box_helicase_dom"/>
</dbReference>
<dbReference type="InterPro" id="IPR050079">
    <property type="entry name" value="DEAD_box_RNA_helicase"/>
</dbReference>
<dbReference type="InterPro" id="IPR014001">
    <property type="entry name" value="Helicase_ATP-bd"/>
</dbReference>
<dbReference type="InterPro" id="IPR001650">
    <property type="entry name" value="Helicase_C-like"/>
</dbReference>
<dbReference type="InterPro" id="IPR027417">
    <property type="entry name" value="P-loop_NTPase"/>
</dbReference>
<dbReference type="InterPro" id="IPR014014">
    <property type="entry name" value="RNA_helicase_DEAD_Q_motif"/>
</dbReference>
<dbReference type="PANTHER" id="PTHR47959:SF24">
    <property type="entry name" value="ATP-DEPENDENT RNA HELICASE"/>
    <property type="match status" value="1"/>
</dbReference>
<dbReference type="PANTHER" id="PTHR47959">
    <property type="entry name" value="ATP-DEPENDENT RNA HELICASE RHLE-RELATED"/>
    <property type="match status" value="1"/>
</dbReference>
<dbReference type="Pfam" id="PF00270">
    <property type="entry name" value="DEAD"/>
    <property type="match status" value="1"/>
</dbReference>
<dbReference type="Pfam" id="PF00271">
    <property type="entry name" value="Helicase_C"/>
    <property type="match status" value="1"/>
</dbReference>
<dbReference type="SMART" id="SM00487">
    <property type="entry name" value="DEXDc"/>
    <property type="match status" value="1"/>
</dbReference>
<dbReference type="SMART" id="SM00490">
    <property type="entry name" value="HELICc"/>
    <property type="match status" value="1"/>
</dbReference>
<dbReference type="SUPFAM" id="SSF52540">
    <property type="entry name" value="P-loop containing nucleoside triphosphate hydrolases"/>
    <property type="match status" value="1"/>
</dbReference>
<dbReference type="PROSITE" id="PS51192">
    <property type="entry name" value="HELICASE_ATP_BIND_1"/>
    <property type="match status" value="1"/>
</dbReference>
<dbReference type="PROSITE" id="PS51194">
    <property type="entry name" value="HELICASE_CTER"/>
    <property type="match status" value="1"/>
</dbReference>
<dbReference type="PROSITE" id="PS51195">
    <property type="entry name" value="Q_MOTIF"/>
    <property type="match status" value="1"/>
</dbReference>
<keyword id="KW-0067">ATP-binding</keyword>
<keyword id="KW-0347">Helicase</keyword>
<keyword id="KW-0378">Hydrolase</keyword>
<keyword id="KW-0547">Nucleotide-binding</keyword>
<keyword id="KW-0539">Nucleus</keyword>
<keyword id="KW-1185">Reference proteome</keyword>
<keyword id="KW-0690">Ribosome biogenesis</keyword>
<keyword id="KW-0694">RNA-binding</keyword>
<keyword id="KW-0698">rRNA processing</keyword>